<keyword id="KW-0012">Acyltransferase</keyword>
<keyword id="KW-0028">Amino-acid biosynthesis</keyword>
<keyword id="KW-0963">Cytoplasm</keyword>
<keyword id="KW-0486">Methionine biosynthesis</keyword>
<keyword id="KW-0614">Plasmid</keyword>
<keyword id="KW-1185">Reference proteome</keyword>
<keyword id="KW-0808">Transferase</keyword>
<proteinExistence type="evidence at protein level"/>
<geneLocation type="plasmid" evidence="4 5">
    <name>pILYOP01</name>
</geneLocation>
<gene>
    <name evidence="1 3" type="primary">metAA2</name>
    <name evidence="4" type="ordered locus">Ilyop_2425</name>
</gene>
<comment type="function">
    <text evidence="1 2">Transfers an acetyl group from acetyl-CoA to L-homoserine, forming acetyl-L-homoserine.</text>
</comment>
<comment type="catalytic activity">
    <reaction evidence="1 2">
        <text>L-homoserine + acetyl-CoA = O-acetyl-L-homoserine + CoA</text>
        <dbReference type="Rhea" id="RHEA:13701"/>
        <dbReference type="ChEBI" id="CHEBI:57287"/>
        <dbReference type="ChEBI" id="CHEBI:57288"/>
        <dbReference type="ChEBI" id="CHEBI:57476"/>
        <dbReference type="ChEBI" id="CHEBI:57716"/>
        <dbReference type="EC" id="2.3.1.31"/>
    </reaction>
</comment>
<comment type="pathway">
    <text evidence="1">Amino-acid biosynthesis; L-methionine biosynthesis via de novo pathway; O-acetyl-L-homoserine from L-homoserine: step 1/1.</text>
</comment>
<comment type="subcellular location">
    <subcellularLocation>
        <location evidence="1">Cytoplasm</location>
    </subcellularLocation>
</comment>
<comment type="similarity">
    <text evidence="1">Belongs to the MetA family.</text>
</comment>
<accession>E3HDJ8</accession>
<dbReference type="EC" id="2.3.1.31" evidence="1 2"/>
<dbReference type="EMBL" id="CP002282">
    <property type="protein sequence ID" value="ADO84184.1"/>
    <property type="molecule type" value="Genomic_DNA"/>
</dbReference>
<dbReference type="RefSeq" id="WP_013388843.1">
    <property type="nucleotide sequence ID" value="NC_014633.1"/>
</dbReference>
<dbReference type="SMR" id="E3HDJ8"/>
<dbReference type="KEGG" id="ipo:Ilyop_2425"/>
<dbReference type="HOGENOM" id="CLU_057851_0_0_0"/>
<dbReference type="OrthoDB" id="9772423at2"/>
<dbReference type="UniPathway" id="UPA00051">
    <property type="reaction ID" value="UER00074"/>
</dbReference>
<dbReference type="Proteomes" id="UP000006875">
    <property type="component" value="Plasmid pILYOP01"/>
</dbReference>
<dbReference type="GO" id="GO:0005737">
    <property type="term" value="C:cytoplasm"/>
    <property type="evidence" value="ECO:0007669"/>
    <property type="project" value="UniProtKB-SubCell"/>
</dbReference>
<dbReference type="GO" id="GO:0004414">
    <property type="term" value="F:homoserine O-acetyltransferase activity"/>
    <property type="evidence" value="ECO:0007669"/>
    <property type="project" value="UniProtKB-EC"/>
</dbReference>
<dbReference type="GO" id="GO:0008899">
    <property type="term" value="F:homoserine O-succinyltransferase activity"/>
    <property type="evidence" value="ECO:0007669"/>
    <property type="project" value="UniProtKB-UniRule"/>
</dbReference>
<dbReference type="GO" id="GO:0009086">
    <property type="term" value="P:methionine biosynthetic process"/>
    <property type="evidence" value="ECO:0007669"/>
    <property type="project" value="UniProtKB-UniRule"/>
</dbReference>
<dbReference type="Gene3D" id="3.40.50.880">
    <property type="match status" value="1"/>
</dbReference>
<dbReference type="HAMAP" id="MF_00295">
    <property type="entry name" value="MetA_acyltransf"/>
    <property type="match status" value="1"/>
</dbReference>
<dbReference type="InterPro" id="IPR029062">
    <property type="entry name" value="Class_I_gatase-like"/>
</dbReference>
<dbReference type="InterPro" id="IPR033752">
    <property type="entry name" value="MetA_family"/>
</dbReference>
<dbReference type="PANTHER" id="PTHR20919">
    <property type="entry name" value="HOMOSERINE O-SUCCINYLTRANSFERASE"/>
    <property type="match status" value="1"/>
</dbReference>
<dbReference type="PANTHER" id="PTHR20919:SF0">
    <property type="entry name" value="HOMOSERINE O-SUCCINYLTRANSFERASE"/>
    <property type="match status" value="1"/>
</dbReference>
<dbReference type="Pfam" id="PF04204">
    <property type="entry name" value="HTS"/>
    <property type="match status" value="1"/>
</dbReference>
<dbReference type="PIRSF" id="PIRSF000450">
    <property type="entry name" value="H_ser_succinyltr"/>
    <property type="match status" value="1"/>
</dbReference>
<dbReference type="SUPFAM" id="SSF52317">
    <property type="entry name" value="Class I glutamine amidotransferase-like"/>
    <property type="match status" value="1"/>
</dbReference>
<feature type="chain" id="PRO_0000440342" description="Homoserine O-acetyltransferase 2">
    <location>
        <begin position="1"/>
        <end position="284"/>
    </location>
</feature>
<feature type="active site" description="Acyl-thioester intermediate" evidence="1">
    <location>
        <position position="133"/>
    </location>
</feature>
<feature type="active site" description="Proton acceptor" evidence="1">
    <location>
        <position position="220"/>
    </location>
</feature>
<feature type="active site" evidence="1">
    <location>
        <position position="222"/>
    </location>
</feature>
<feature type="binding site" evidence="1">
    <location>
        <position position="154"/>
    </location>
    <ligand>
        <name>substrate</name>
    </ligand>
</feature>
<feature type="binding site" evidence="1">
    <location>
        <position position="178"/>
    </location>
    <ligand>
        <name>substrate</name>
    </ligand>
</feature>
<feature type="binding site" evidence="1">
    <location>
        <position position="234"/>
    </location>
    <ligand>
        <name>substrate</name>
    </ligand>
</feature>
<feature type="site" description="Important for acyl-CoA specificity" evidence="1">
    <location>
        <position position="105"/>
    </location>
</feature>
<feature type="site" description="Important for substrate specificity" evidence="1">
    <location>
        <position position="178"/>
    </location>
</feature>
<sequence>MCCIAGAPSLSGRERAEKEGIRFKENKGELKIGIINLMPFKEEVEYQFYAVLGRFDISVEVEFLYPENHVFKNTDGSYIKDNYYPLGELNNRNYDAIIMTGAPVELLDFQKVNYWDEIKNLIKSNKLPALYICWGAQAALYVKYGIEKFTLNEKLLGIFRHRTNKNPFVSGEFWAPHSRNTQNSSKDIKNAGLRILAESDEAGVYMASDRDYREFYISGHGEYQRERLKYEYSRDQNLFPKNYFPEDDPKKEPPMKWDSHRKEFYYKWLSHIREKKFSNISDKR</sequence>
<organism>
    <name type="scientific">Ilyobacter polytropus (strain ATCC 51220 / DSM 2926 / LMG 16218 / CuHBu1)</name>
    <dbReference type="NCBI Taxonomy" id="572544"/>
    <lineage>
        <taxon>Bacteria</taxon>
        <taxon>Fusobacteriati</taxon>
        <taxon>Fusobacteriota</taxon>
        <taxon>Fusobacteriia</taxon>
        <taxon>Fusobacteriales</taxon>
        <taxon>Fusobacteriaceae</taxon>
        <taxon>Ilyobacter</taxon>
    </lineage>
</organism>
<protein>
    <recommendedName>
        <fullName evidence="1">Homoserine O-acetyltransferase 2</fullName>
        <shortName evidence="1">HAT 2</shortName>
        <ecNumber evidence="1 2">2.3.1.31</ecNumber>
    </recommendedName>
    <alternativeName>
        <fullName evidence="1">Homoserine transacetylase 2</fullName>
        <shortName evidence="1">HTA 2</shortName>
    </alternativeName>
</protein>
<name>META2_ILYPC</name>
<reference key="1">
    <citation type="journal article" date="2010" name="Stand. Genomic Sci.">
        <title>Complete genome sequence of Ilyobacter polytropus type strain (CuHbu1).</title>
        <authorList>
            <person name="Sikorski J."/>
            <person name="Chertkov O."/>
            <person name="Lapidus A."/>
            <person name="Nolan M."/>
            <person name="Lucas S."/>
            <person name="Del Rio T.G."/>
            <person name="Tice H."/>
            <person name="Cheng J.F."/>
            <person name="Tapia R."/>
            <person name="Han C."/>
            <person name="Goodwin L."/>
            <person name="Pitluck S."/>
            <person name="Liolios K."/>
            <person name="Ivanova N."/>
            <person name="Mavromatis K."/>
            <person name="Mikhailova N."/>
            <person name="Pati A."/>
            <person name="Chen A."/>
            <person name="Palaniappan K."/>
            <person name="Land M."/>
            <person name="Hauser L."/>
            <person name="Chang Y.J."/>
            <person name="Jeffries C.D."/>
            <person name="Brambilla E."/>
            <person name="Yasawong M."/>
            <person name="Rohde M."/>
            <person name="Pukall R."/>
            <person name="Spring S."/>
            <person name="Goker M."/>
            <person name="Woyke T."/>
            <person name="Bristow J."/>
            <person name="Eisen J.A."/>
            <person name="Markowitz V."/>
            <person name="Hugenholtz P."/>
            <person name="Kyrpides N.C."/>
            <person name="Klenk H.P."/>
        </authorList>
    </citation>
    <scope>NUCLEOTIDE SEQUENCE [LARGE SCALE GENOMIC DNA]</scope>
    <source>
        <strain>ATCC 51220 / DSM 2926 / LMG 16218 / CuHBu1</strain>
    </source>
</reference>
<reference key="2">
    <citation type="journal article" date="2017" name="Nat. Chem. Biol.">
        <title>Parallel evolution of non-homologous isofunctional enzymes in methionine biosynthesis.</title>
        <authorList>
            <person name="Bastard K."/>
            <person name="Perret A."/>
            <person name="Mariage A."/>
            <person name="Bessonnet T."/>
            <person name="Pinet-Turpault A."/>
            <person name="Petit J.L."/>
            <person name="Darii E."/>
            <person name="Bazire P."/>
            <person name="Vergne-Vaxelaire C."/>
            <person name="Brewee C."/>
            <person name="Debard A."/>
            <person name="Pellouin V."/>
            <person name="Besnard-Gonnet M."/>
            <person name="Artiguenave F."/>
            <person name="Medigue C."/>
            <person name="Vallenet D."/>
            <person name="Danchin A."/>
            <person name="Zaparucha A."/>
            <person name="Weissenbach J."/>
            <person name="Salanoubat M."/>
            <person name="de Berardinis V."/>
        </authorList>
    </citation>
    <scope>FUNCTION</scope>
    <scope>CATALYTIC ACTIVITY</scope>
</reference>
<evidence type="ECO:0000255" key="1">
    <source>
        <dbReference type="HAMAP-Rule" id="MF_00295"/>
    </source>
</evidence>
<evidence type="ECO:0000269" key="2">
    <source>
    </source>
</evidence>
<evidence type="ECO:0000303" key="3">
    <source>
    </source>
</evidence>
<evidence type="ECO:0000312" key="4">
    <source>
        <dbReference type="EMBL" id="ADO84184.1"/>
    </source>
</evidence>
<evidence type="ECO:0000312" key="5">
    <source>
        <dbReference type="Proteomes" id="UP000006875"/>
    </source>
</evidence>